<evidence type="ECO:0000255" key="1">
    <source>
        <dbReference type="HAMAP-Rule" id="MF_02041"/>
    </source>
</evidence>
<name>DUSA_SHIFL</name>
<dbReference type="EC" id="1.3.1.-" evidence="1"/>
<dbReference type="EC" id="1.3.1.91" evidence="1"/>
<dbReference type="EMBL" id="AE005674">
    <property type="protein sequence ID" value="AAN45578.2"/>
    <property type="molecule type" value="Genomic_DNA"/>
</dbReference>
<dbReference type="EMBL" id="AE014073">
    <property type="protein sequence ID" value="AAP18620.1"/>
    <property type="molecule type" value="Genomic_DNA"/>
</dbReference>
<dbReference type="SMR" id="Q7UBC5"/>
<dbReference type="STRING" id="198214.SF4156"/>
<dbReference type="PaxDb" id="198214-SF4156"/>
<dbReference type="KEGG" id="sfl:SF4156"/>
<dbReference type="KEGG" id="sfx:S3574"/>
<dbReference type="PATRIC" id="fig|198214.7.peg.4903"/>
<dbReference type="HOGENOM" id="CLU_013299_2_1_6"/>
<dbReference type="Proteomes" id="UP000001006">
    <property type="component" value="Chromosome"/>
</dbReference>
<dbReference type="Proteomes" id="UP000002673">
    <property type="component" value="Chromosome"/>
</dbReference>
<dbReference type="GO" id="GO:0050660">
    <property type="term" value="F:flavin adenine dinucleotide binding"/>
    <property type="evidence" value="ECO:0007669"/>
    <property type="project" value="InterPro"/>
</dbReference>
<dbReference type="GO" id="GO:0010181">
    <property type="term" value="F:FMN binding"/>
    <property type="evidence" value="ECO:0007669"/>
    <property type="project" value="UniProtKB-UniRule"/>
</dbReference>
<dbReference type="GO" id="GO:0000049">
    <property type="term" value="F:tRNA binding"/>
    <property type="evidence" value="ECO:0007669"/>
    <property type="project" value="UniProtKB-UniRule"/>
</dbReference>
<dbReference type="GO" id="GO:0102264">
    <property type="term" value="F:tRNA-dihydrouridine20 synthase activity"/>
    <property type="evidence" value="ECO:0007669"/>
    <property type="project" value="UniProtKB-EC"/>
</dbReference>
<dbReference type="GO" id="GO:0102266">
    <property type="term" value="F:tRNA-dihydrouridine20a synthase activity"/>
    <property type="evidence" value="ECO:0007669"/>
    <property type="project" value="RHEA"/>
</dbReference>
<dbReference type="CDD" id="cd02801">
    <property type="entry name" value="DUS_like_FMN"/>
    <property type="match status" value="1"/>
</dbReference>
<dbReference type="FunFam" id="1.20.120.1460:FF:000001">
    <property type="entry name" value="tRNA-dihydrouridine(20/20a) synthase"/>
    <property type="match status" value="1"/>
</dbReference>
<dbReference type="FunFam" id="3.20.20.70:FF:000083">
    <property type="entry name" value="tRNA-dihydrouridine(20/20a) synthase"/>
    <property type="match status" value="1"/>
</dbReference>
<dbReference type="Gene3D" id="1.20.120.1460">
    <property type="match status" value="1"/>
</dbReference>
<dbReference type="Gene3D" id="3.20.20.70">
    <property type="entry name" value="Aldolase class I"/>
    <property type="match status" value="1"/>
</dbReference>
<dbReference type="HAMAP" id="MF_02041">
    <property type="entry name" value="DusA_subfam"/>
    <property type="match status" value="1"/>
</dbReference>
<dbReference type="InterPro" id="IPR013785">
    <property type="entry name" value="Aldolase_TIM"/>
</dbReference>
<dbReference type="InterPro" id="IPR035587">
    <property type="entry name" value="DUS-like_FMN-bd"/>
</dbReference>
<dbReference type="InterPro" id="IPR001269">
    <property type="entry name" value="DUS_fam"/>
</dbReference>
<dbReference type="InterPro" id="IPR004653">
    <property type="entry name" value="DusA"/>
</dbReference>
<dbReference type="InterPro" id="IPR018517">
    <property type="entry name" value="tRNA_hU_synthase_CS"/>
</dbReference>
<dbReference type="NCBIfam" id="NF008774">
    <property type="entry name" value="PRK11815.1"/>
    <property type="match status" value="1"/>
</dbReference>
<dbReference type="NCBIfam" id="TIGR00742">
    <property type="entry name" value="yjbN"/>
    <property type="match status" value="1"/>
</dbReference>
<dbReference type="PANTHER" id="PTHR42907">
    <property type="entry name" value="FMN-LINKED OXIDOREDUCTASES SUPERFAMILY PROTEIN"/>
    <property type="match status" value="1"/>
</dbReference>
<dbReference type="PANTHER" id="PTHR42907:SF1">
    <property type="entry name" value="FMN-LINKED OXIDOREDUCTASES SUPERFAMILY PROTEIN"/>
    <property type="match status" value="1"/>
</dbReference>
<dbReference type="Pfam" id="PF01207">
    <property type="entry name" value="Dus"/>
    <property type="match status" value="1"/>
</dbReference>
<dbReference type="PIRSF" id="PIRSF006621">
    <property type="entry name" value="Dus"/>
    <property type="match status" value="1"/>
</dbReference>
<dbReference type="SUPFAM" id="SSF51395">
    <property type="entry name" value="FMN-linked oxidoreductases"/>
    <property type="match status" value="1"/>
</dbReference>
<dbReference type="PROSITE" id="PS01136">
    <property type="entry name" value="UPF0034"/>
    <property type="match status" value="1"/>
</dbReference>
<feature type="chain" id="PRO_0000162075" description="tRNA-dihydrouridine(20/20a) synthase">
    <location>
        <begin position="1"/>
        <end position="339"/>
    </location>
</feature>
<feature type="active site" description="Proton donor" evidence="1">
    <location>
        <position position="108"/>
    </location>
</feature>
<feature type="binding site" evidence="1">
    <location>
        <begin position="26"/>
        <end position="28"/>
    </location>
    <ligand>
        <name>FMN</name>
        <dbReference type="ChEBI" id="CHEBI:58210"/>
    </ligand>
</feature>
<feature type="binding site" evidence="1">
    <location>
        <position position="78"/>
    </location>
    <ligand>
        <name>FMN</name>
        <dbReference type="ChEBI" id="CHEBI:58210"/>
    </ligand>
</feature>
<feature type="binding site" evidence="1">
    <location>
        <position position="147"/>
    </location>
    <ligand>
        <name>FMN</name>
        <dbReference type="ChEBI" id="CHEBI:58210"/>
    </ligand>
</feature>
<feature type="binding site" evidence="1">
    <location>
        <position position="180"/>
    </location>
    <ligand>
        <name>FMN</name>
        <dbReference type="ChEBI" id="CHEBI:58210"/>
    </ligand>
</feature>
<feature type="binding site" evidence="1">
    <location>
        <begin position="220"/>
        <end position="222"/>
    </location>
    <ligand>
        <name>FMN</name>
        <dbReference type="ChEBI" id="CHEBI:58210"/>
    </ligand>
</feature>
<feature type="binding site" evidence="1">
    <location>
        <begin position="242"/>
        <end position="243"/>
    </location>
    <ligand>
        <name>FMN</name>
        <dbReference type="ChEBI" id="CHEBI:58210"/>
    </ligand>
</feature>
<feature type="site" description="Interacts with tRNA" evidence="1">
    <location>
        <position position="105"/>
    </location>
</feature>
<feature type="site" description="Interacts with tRNA; defines subfamily-specific binding signature" evidence="1">
    <location>
        <position position="192"/>
    </location>
</feature>
<feature type="site" description="Interacts with tRNA" evidence="1">
    <location>
        <position position="195"/>
    </location>
</feature>
<feature type="site" description="Interacts with tRNA; defines subfamily-specific binding signature" evidence="1">
    <location>
        <position position="308"/>
    </location>
</feature>
<feature type="site" description="Interacts with tRNA; defines subfamily-specific binding signature" evidence="1">
    <location>
        <position position="311"/>
    </location>
</feature>
<protein>
    <recommendedName>
        <fullName evidence="1">tRNA-dihydrouridine(20/20a) synthase</fullName>
        <ecNumber evidence="1">1.3.1.-</ecNumber>
        <ecNumber evidence="1">1.3.1.91</ecNumber>
    </recommendedName>
    <alternativeName>
        <fullName evidence="1">U20-specific dihydrouridine synthase</fullName>
        <shortName evidence="1">U20-specific Dus</shortName>
    </alternativeName>
    <alternativeName>
        <fullName evidence="1">tRNA-dihydrouridine synthase A</fullName>
    </alternativeName>
</protein>
<sequence>MQKINQTSAMPEKTDVHWSGRFSVAPMLDWTDRHCRYFLRLLSRNTLLYTEMVTTGAIIHGKGDYLAYSEEEHPVALQLGGSDPAALAQCAKLAEARGYDEINLNVGCPSDRVQNGMFGACLMGNAQLVADCVKAMRDVVSIPVTVKTRIGIDDQDSYEFLCDFINTVSGKGECEMFIIHARKAWLSGLSPKENREIPPLDYPRVYQLKRDFPHLTMSINGGIKSLEEAKAHLQHMDGVMVGREAYQNPGILAAVDREIFGSSDTDADPVAVVRAMYPYIEHELSQGTYLGHIIRHMLGLFQGIPGARQWRRYLSENAHKAGADINVLEHALKLVADKR</sequence>
<gene>
    <name evidence="1" type="primary">dusA</name>
    <name type="ordered locus">SF4156</name>
    <name type="ordered locus">S3574</name>
</gene>
<keyword id="KW-0285">Flavoprotein</keyword>
<keyword id="KW-0288">FMN</keyword>
<keyword id="KW-0521">NADP</keyword>
<keyword id="KW-0560">Oxidoreductase</keyword>
<keyword id="KW-1185">Reference proteome</keyword>
<keyword id="KW-0694">RNA-binding</keyword>
<keyword id="KW-0819">tRNA processing</keyword>
<keyword id="KW-0820">tRNA-binding</keyword>
<proteinExistence type="inferred from homology"/>
<reference key="1">
    <citation type="journal article" date="2002" name="Nucleic Acids Res.">
        <title>Genome sequence of Shigella flexneri 2a: insights into pathogenicity through comparison with genomes of Escherichia coli K12 and O157.</title>
        <authorList>
            <person name="Jin Q."/>
            <person name="Yuan Z."/>
            <person name="Xu J."/>
            <person name="Wang Y."/>
            <person name="Shen Y."/>
            <person name="Lu W."/>
            <person name="Wang J."/>
            <person name="Liu H."/>
            <person name="Yang J."/>
            <person name="Yang F."/>
            <person name="Zhang X."/>
            <person name="Zhang J."/>
            <person name="Yang G."/>
            <person name="Wu H."/>
            <person name="Qu D."/>
            <person name="Dong J."/>
            <person name="Sun L."/>
            <person name="Xue Y."/>
            <person name="Zhao A."/>
            <person name="Gao Y."/>
            <person name="Zhu J."/>
            <person name="Kan B."/>
            <person name="Ding K."/>
            <person name="Chen S."/>
            <person name="Cheng H."/>
            <person name="Yao Z."/>
            <person name="He B."/>
            <person name="Chen R."/>
            <person name="Ma D."/>
            <person name="Qiang B."/>
            <person name="Wen Y."/>
            <person name="Hou Y."/>
            <person name="Yu J."/>
        </authorList>
    </citation>
    <scope>NUCLEOTIDE SEQUENCE [LARGE SCALE GENOMIC DNA]</scope>
    <source>
        <strain>301 / Serotype 2a</strain>
    </source>
</reference>
<reference key="2">
    <citation type="journal article" date="2003" name="Infect. Immun.">
        <title>Complete genome sequence and comparative genomics of Shigella flexneri serotype 2a strain 2457T.</title>
        <authorList>
            <person name="Wei J."/>
            <person name="Goldberg M.B."/>
            <person name="Burland V."/>
            <person name="Venkatesan M.M."/>
            <person name="Deng W."/>
            <person name="Fournier G."/>
            <person name="Mayhew G.F."/>
            <person name="Plunkett G. III"/>
            <person name="Rose D.J."/>
            <person name="Darling A."/>
            <person name="Mau B."/>
            <person name="Perna N.T."/>
            <person name="Payne S.M."/>
            <person name="Runyen-Janecky L.J."/>
            <person name="Zhou S."/>
            <person name="Schwartz D.C."/>
            <person name="Blattner F.R."/>
        </authorList>
    </citation>
    <scope>NUCLEOTIDE SEQUENCE [LARGE SCALE GENOMIC DNA]</scope>
    <source>
        <strain>ATCC 700930 / 2457T / Serotype 2a</strain>
    </source>
</reference>
<organism>
    <name type="scientific">Shigella flexneri</name>
    <dbReference type="NCBI Taxonomy" id="623"/>
    <lineage>
        <taxon>Bacteria</taxon>
        <taxon>Pseudomonadati</taxon>
        <taxon>Pseudomonadota</taxon>
        <taxon>Gammaproteobacteria</taxon>
        <taxon>Enterobacterales</taxon>
        <taxon>Enterobacteriaceae</taxon>
        <taxon>Shigella</taxon>
    </lineage>
</organism>
<comment type="function">
    <text evidence="1">Catalyzes the synthesis of 5,6-dihydrouridine (D), a modified base found in the D-loop of most tRNAs, via the reduction of the C5-C6 double bond in target uridines. Specifically modifies U20 and U20a in tRNAs.</text>
</comment>
<comment type="catalytic activity">
    <reaction evidence="1">
        <text>5,6-dihydrouridine(20) in tRNA + NADP(+) = uridine(20) in tRNA + NADPH + H(+)</text>
        <dbReference type="Rhea" id="RHEA:53336"/>
        <dbReference type="Rhea" id="RHEA-COMP:13533"/>
        <dbReference type="Rhea" id="RHEA-COMP:13534"/>
        <dbReference type="ChEBI" id="CHEBI:15378"/>
        <dbReference type="ChEBI" id="CHEBI:57783"/>
        <dbReference type="ChEBI" id="CHEBI:58349"/>
        <dbReference type="ChEBI" id="CHEBI:65315"/>
        <dbReference type="ChEBI" id="CHEBI:74443"/>
        <dbReference type="EC" id="1.3.1.91"/>
    </reaction>
</comment>
<comment type="catalytic activity">
    <reaction evidence="1">
        <text>5,6-dihydrouridine(20) in tRNA + NAD(+) = uridine(20) in tRNA + NADH + H(+)</text>
        <dbReference type="Rhea" id="RHEA:53340"/>
        <dbReference type="Rhea" id="RHEA-COMP:13533"/>
        <dbReference type="Rhea" id="RHEA-COMP:13534"/>
        <dbReference type="ChEBI" id="CHEBI:15378"/>
        <dbReference type="ChEBI" id="CHEBI:57540"/>
        <dbReference type="ChEBI" id="CHEBI:57945"/>
        <dbReference type="ChEBI" id="CHEBI:65315"/>
        <dbReference type="ChEBI" id="CHEBI:74443"/>
        <dbReference type="EC" id="1.3.1.91"/>
    </reaction>
</comment>
<comment type="catalytic activity">
    <reaction evidence="1">
        <text>5,6-dihydrouridine(20a) in tRNA + NADP(+) = uridine(20a) in tRNA + NADPH + H(+)</text>
        <dbReference type="Rhea" id="RHEA:53344"/>
        <dbReference type="Rhea" id="RHEA-COMP:13535"/>
        <dbReference type="Rhea" id="RHEA-COMP:13536"/>
        <dbReference type="ChEBI" id="CHEBI:15378"/>
        <dbReference type="ChEBI" id="CHEBI:57783"/>
        <dbReference type="ChEBI" id="CHEBI:58349"/>
        <dbReference type="ChEBI" id="CHEBI:65315"/>
        <dbReference type="ChEBI" id="CHEBI:74443"/>
    </reaction>
</comment>
<comment type="catalytic activity">
    <reaction evidence="1">
        <text>5,6-dihydrouridine(20a) in tRNA + NAD(+) = uridine(20a) in tRNA + NADH + H(+)</text>
        <dbReference type="Rhea" id="RHEA:53348"/>
        <dbReference type="Rhea" id="RHEA-COMP:13535"/>
        <dbReference type="Rhea" id="RHEA-COMP:13536"/>
        <dbReference type="ChEBI" id="CHEBI:15378"/>
        <dbReference type="ChEBI" id="CHEBI:57540"/>
        <dbReference type="ChEBI" id="CHEBI:57945"/>
        <dbReference type="ChEBI" id="CHEBI:65315"/>
        <dbReference type="ChEBI" id="CHEBI:74443"/>
    </reaction>
</comment>
<comment type="cofactor">
    <cofactor evidence="1">
        <name>FMN</name>
        <dbReference type="ChEBI" id="CHEBI:58210"/>
    </cofactor>
</comment>
<comment type="similarity">
    <text evidence="1">Belongs to the Dus family. DusA subfamily.</text>
</comment>
<accession>Q7UBC5</accession>
<accession>Q83IQ1</accession>